<accession>A7ZWV5</accession>
<protein>
    <recommendedName>
        <fullName evidence="1">Betaine aldehyde dehydrogenase</fullName>
        <shortName evidence="1">BADH</shortName>
        <ecNumber evidence="1">1.2.1.8</ecNumber>
    </recommendedName>
</protein>
<proteinExistence type="inferred from homology"/>
<keyword id="KW-0479">Metal-binding</keyword>
<keyword id="KW-0520">NAD</keyword>
<keyword id="KW-0521">NADP</keyword>
<keyword id="KW-0558">Oxidation</keyword>
<keyword id="KW-0560">Oxidoreductase</keyword>
<keyword id="KW-0630">Potassium</keyword>
<comment type="function">
    <text evidence="1">Involved in the biosynthesis of the osmoprotectant glycine betaine. Catalyzes the irreversible oxidation of betaine aldehyde to the corresponding acid.</text>
</comment>
<comment type="catalytic activity">
    <reaction evidence="1">
        <text>betaine aldehyde + NAD(+) + H2O = glycine betaine + NADH + 2 H(+)</text>
        <dbReference type="Rhea" id="RHEA:15305"/>
        <dbReference type="ChEBI" id="CHEBI:15377"/>
        <dbReference type="ChEBI" id="CHEBI:15378"/>
        <dbReference type="ChEBI" id="CHEBI:15710"/>
        <dbReference type="ChEBI" id="CHEBI:17750"/>
        <dbReference type="ChEBI" id="CHEBI:57540"/>
        <dbReference type="ChEBI" id="CHEBI:57945"/>
        <dbReference type="EC" id="1.2.1.8"/>
    </reaction>
    <physiologicalReaction direction="left-to-right" evidence="1">
        <dbReference type="Rhea" id="RHEA:15306"/>
    </physiologicalReaction>
</comment>
<comment type="cofactor">
    <cofactor evidence="1">
        <name>K(+)</name>
        <dbReference type="ChEBI" id="CHEBI:29103"/>
    </cofactor>
    <text evidence="1">Binds 2 potassium ions per subunit.</text>
</comment>
<comment type="pathway">
    <text evidence="1">Amine and polyamine biosynthesis; betaine biosynthesis via choline pathway; betaine from betaine aldehyde: step 1/1.</text>
</comment>
<comment type="subunit">
    <text evidence="1">Dimer of dimers.</text>
</comment>
<comment type="similarity">
    <text evidence="1">Belongs to the aldehyde dehydrogenase family.</text>
</comment>
<dbReference type="EC" id="1.2.1.8" evidence="1"/>
<dbReference type="EMBL" id="CP000802">
    <property type="protein sequence ID" value="ABV04759.1"/>
    <property type="molecule type" value="Genomic_DNA"/>
</dbReference>
<dbReference type="RefSeq" id="WP_000089082.1">
    <property type="nucleotide sequence ID" value="NC_009800.1"/>
</dbReference>
<dbReference type="SMR" id="A7ZWV5"/>
<dbReference type="KEGG" id="ecx:EcHS_A0371"/>
<dbReference type="HOGENOM" id="CLU_005391_0_0_6"/>
<dbReference type="UniPathway" id="UPA00529">
    <property type="reaction ID" value="UER00386"/>
</dbReference>
<dbReference type="GO" id="GO:0008802">
    <property type="term" value="F:betaine-aldehyde dehydrogenase (NAD+) activity"/>
    <property type="evidence" value="ECO:0007669"/>
    <property type="project" value="UniProtKB-UniRule"/>
</dbReference>
<dbReference type="GO" id="GO:0046872">
    <property type="term" value="F:metal ion binding"/>
    <property type="evidence" value="ECO:0007669"/>
    <property type="project" value="UniProtKB-KW"/>
</dbReference>
<dbReference type="GO" id="GO:0019285">
    <property type="term" value="P:glycine betaine biosynthetic process from choline"/>
    <property type="evidence" value="ECO:0007669"/>
    <property type="project" value="UniProtKB-UniRule"/>
</dbReference>
<dbReference type="CDD" id="cd07090">
    <property type="entry name" value="ALDH_F9_TMBADH"/>
    <property type="match status" value="1"/>
</dbReference>
<dbReference type="FunFam" id="3.40.309.10:FF:000014">
    <property type="entry name" value="NAD/NADP-dependent betaine aldehyde dehydrogenase"/>
    <property type="match status" value="1"/>
</dbReference>
<dbReference type="FunFam" id="3.40.605.10:FF:000007">
    <property type="entry name" value="NAD/NADP-dependent betaine aldehyde dehydrogenase"/>
    <property type="match status" value="1"/>
</dbReference>
<dbReference type="Gene3D" id="3.40.605.10">
    <property type="entry name" value="Aldehyde Dehydrogenase, Chain A, domain 1"/>
    <property type="match status" value="1"/>
</dbReference>
<dbReference type="Gene3D" id="3.40.309.10">
    <property type="entry name" value="Aldehyde Dehydrogenase, Chain A, domain 2"/>
    <property type="match status" value="1"/>
</dbReference>
<dbReference type="HAMAP" id="MF_00804">
    <property type="entry name" value="BADH"/>
    <property type="match status" value="1"/>
</dbReference>
<dbReference type="InterPro" id="IPR016161">
    <property type="entry name" value="Ald_DH/histidinol_DH"/>
</dbReference>
<dbReference type="InterPro" id="IPR016163">
    <property type="entry name" value="Ald_DH_C"/>
</dbReference>
<dbReference type="InterPro" id="IPR016160">
    <property type="entry name" value="Ald_DH_CS_CYS"/>
</dbReference>
<dbReference type="InterPro" id="IPR029510">
    <property type="entry name" value="Ald_DH_CS_GLU"/>
</dbReference>
<dbReference type="InterPro" id="IPR016162">
    <property type="entry name" value="Ald_DH_N"/>
</dbReference>
<dbReference type="InterPro" id="IPR015590">
    <property type="entry name" value="Aldehyde_DH_dom"/>
</dbReference>
<dbReference type="InterPro" id="IPR011264">
    <property type="entry name" value="BADH"/>
</dbReference>
<dbReference type="NCBIfam" id="TIGR01804">
    <property type="entry name" value="BADH"/>
    <property type="match status" value="1"/>
</dbReference>
<dbReference type="NCBIfam" id="NF009725">
    <property type="entry name" value="PRK13252.1"/>
    <property type="match status" value="1"/>
</dbReference>
<dbReference type="PANTHER" id="PTHR11699">
    <property type="entry name" value="ALDEHYDE DEHYDROGENASE-RELATED"/>
    <property type="match status" value="1"/>
</dbReference>
<dbReference type="Pfam" id="PF00171">
    <property type="entry name" value="Aldedh"/>
    <property type="match status" value="1"/>
</dbReference>
<dbReference type="SUPFAM" id="SSF53720">
    <property type="entry name" value="ALDH-like"/>
    <property type="match status" value="1"/>
</dbReference>
<dbReference type="PROSITE" id="PS00070">
    <property type="entry name" value="ALDEHYDE_DEHYDR_CYS"/>
    <property type="match status" value="1"/>
</dbReference>
<dbReference type="PROSITE" id="PS00687">
    <property type="entry name" value="ALDEHYDE_DEHYDR_GLU"/>
    <property type="match status" value="1"/>
</dbReference>
<gene>
    <name evidence="1" type="primary">betB</name>
    <name type="ordered locus">EcHS_A0371</name>
</gene>
<feature type="chain" id="PRO_1000062269" description="Betaine aldehyde dehydrogenase">
    <location>
        <begin position="1"/>
        <end position="490"/>
    </location>
</feature>
<feature type="active site" description="Charge relay system" evidence="1">
    <location>
        <position position="162"/>
    </location>
</feature>
<feature type="active site" description="Proton acceptor" evidence="1">
    <location>
        <position position="252"/>
    </location>
</feature>
<feature type="active site" description="Nucleophile" evidence="1">
    <location>
        <position position="286"/>
    </location>
</feature>
<feature type="active site" description="Charge relay system" evidence="1">
    <location>
        <position position="464"/>
    </location>
</feature>
<feature type="binding site" evidence="1">
    <location>
        <position position="26"/>
    </location>
    <ligand>
        <name>K(+)</name>
        <dbReference type="ChEBI" id="CHEBI:29103"/>
        <label>1</label>
    </ligand>
</feature>
<feature type="binding site" evidence="1">
    <location>
        <position position="27"/>
    </location>
    <ligand>
        <name>K(+)</name>
        <dbReference type="ChEBI" id="CHEBI:29103"/>
        <label>1</label>
    </ligand>
</feature>
<feature type="binding site" evidence="1">
    <location>
        <position position="93"/>
    </location>
    <ligand>
        <name>K(+)</name>
        <dbReference type="ChEBI" id="CHEBI:29103"/>
        <label>1</label>
    </ligand>
</feature>
<feature type="binding site" evidence="1">
    <location>
        <begin position="150"/>
        <end position="152"/>
    </location>
    <ligand>
        <name>NAD(+)</name>
        <dbReference type="ChEBI" id="CHEBI:57540"/>
    </ligand>
</feature>
<feature type="binding site" evidence="1">
    <location>
        <begin position="176"/>
        <end position="179"/>
    </location>
    <ligand>
        <name>NAD(+)</name>
        <dbReference type="ChEBI" id="CHEBI:57540"/>
    </ligand>
</feature>
<feature type="binding site" evidence="1">
    <location>
        <position position="180"/>
    </location>
    <ligand>
        <name>K(+)</name>
        <dbReference type="ChEBI" id="CHEBI:29103"/>
        <label>1</label>
    </ligand>
</feature>
<feature type="binding site" evidence="1">
    <location>
        <begin position="230"/>
        <end position="233"/>
    </location>
    <ligand>
        <name>NAD(+)</name>
        <dbReference type="ChEBI" id="CHEBI:57540"/>
    </ligand>
</feature>
<feature type="binding site" evidence="1">
    <location>
        <position position="246"/>
    </location>
    <ligand>
        <name>K(+)</name>
        <dbReference type="ChEBI" id="CHEBI:29103"/>
        <label>2</label>
    </ligand>
</feature>
<feature type="binding site" evidence="1">
    <location>
        <position position="254"/>
    </location>
    <ligand>
        <name>NAD(+)</name>
        <dbReference type="ChEBI" id="CHEBI:57540"/>
    </ligand>
</feature>
<feature type="binding site" description="covalent" evidence="1">
    <location>
        <position position="286"/>
    </location>
    <ligand>
        <name>NAD(+)</name>
        <dbReference type="ChEBI" id="CHEBI:57540"/>
    </ligand>
</feature>
<feature type="binding site" evidence="1">
    <location>
        <position position="387"/>
    </location>
    <ligand>
        <name>NAD(+)</name>
        <dbReference type="ChEBI" id="CHEBI:57540"/>
    </ligand>
</feature>
<feature type="binding site" evidence="1">
    <location>
        <position position="457"/>
    </location>
    <ligand>
        <name>K(+)</name>
        <dbReference type="ChEBI" id="CHEBI:29103"/>
        <label>2</label>
    </ligand>
</feature>
<feature type="binding site" evidence="1">
    <location>
        <position position="460"/>
    </location>
    <ligand>
        <name>K(+)</name>
        <dbReference type="ChEBI" id="CHEBI:29103"/>
        <label>2</label>
    </ligand>
</feature>
<feature type="site" description="Seems to be a necessary countercharge to the potassium cations" evidence="1">
    <location>
        <position position="248"/>
    </location>
</feature>
<feature type="modified residue" description="Cysteine sulfenic acid (-SOH)" evidence="1">
    <location>
        <position position="286"/>
    </location>
</feature>
<sequence>MSRMAEQQLYIHGGYTSATSGRTFETINPANGNVLATVQAAGREDVDRAVKSAQQGQKIWAAMTAMERSRILRRAVDILRERNDELAKLETLDTGKAYSETSTVDIVTGADVLEYYAGLIPALEGSQIPLRETSFVYTRREPLGVVAGIGAWNYPIQIALWKSAPALAAGNAMIFKPSEVTPLTALKLAEIYSEAGLPDGVFNVLPGVGAETGQYLTEHPGIAKVSFTGGVASGKKVMANSAASSLKEVTMELGGKSPLIVFDDADLDLAADIAMMANFFSSGQVCTNGTRVFVPAKCKAAFEQKILARVERIRAGDVFDPQTNFGPLVSFPHRDNVLRYIAKGQEEGARVLCGGDVLKGDGFDNGAWVAPTVFTDCRDDMTIVREEIFGPVMSILTYETEDEVIRRANDTDYGLAAGIVTADLNRAHRVIHQLEAGICWINTWGESPAEMPVGGYKHSGIGRENGVMTLQSYTQVKSIQVEMAKFQSIF</sequence>
<evidence type="ECO:0000255" key="1">
    <source>
        <dbReference type="HAMAP-Rule" id="MF_00804"/>
    </source>
</evidence>
<name>BETB_ECOHS</name>
<organism>
    <name type="scientific">Escherichia coli O9:H4 (strain HS)</name>
    <dbReference type="NCBI Taxonomy" id="331112"/>
    <lineage>
        <taxon>Bacteria</taxon>
        <taxon>Pseudomonadati</taxon>
        <taxon>Pseudomonadota</taxon>
        <taxon>Gammaproteobacteria</taxon>
        <taxon>Enterobacterales</taxon>
        <taxon>Enterobacteriaceae</taxon>
        <taxon>Escherichia</taxon>
    </lineage>
</organism>
<reference key="1">
    <citation type="journal article" date="2008" name="J. Bacteriol.">
        <title>The pangenome structure of Escherichia coli: comparative genomic analysis of E. coli commensal and pathogenic isolates.</title>
        <authorList>
            <person name="Rasko D.A."/>
            <person name="Rosovitz M.J."/>
            <person name="Myers G.S.A."/>
            <person name="Mongodin E.F."/>
            <person name="Fricke W.F."/>
            <person name="Gajer P."/>
            <person name="Crabtree J."/>
            <person name="Sebaihia M."/>
            <person name="Thomson N.R."/>
            <person name="Chaudhuri R."/>
            <person name="Henderson I.R."/>
            <person name="Sperandio V."/>
            <person name="Ravel J."/>
        </authorList>
    </citation>
    <scope>NUCLEOTIDE SEQUENCE [LARGE SCALE GENOMIC DNA]</scope>
    <source>
        <strain>HS</strain>
    </source>
</reference>